<sequence>MADEEISKAFRDLQFKTNETRMRIVQGEQNKKVNHQKMRISESTKRNLIGLNEDLKYYRSVGRMFLLTDKASEIARHETEAKQSKDKIEAIDKQKEYLEKGLVEAESNLRELIQSRR</sequence>
<protein>
    <recommendedName>
        <fullName>Probable prefoldin subunit 1</fullName>
    </recommendedName>
</protein>
<organism>
    <name type="scientific">Caenorhabditis briggsae</name>
    <dbReference type="NCBI Taxonomy" id="6238"/>
    <lineage>
        <taxon>Eukaryota</taxon>
        <taxon>Metazoa</taxon>
        <taxon>Ecdysozoa</taxon>
        <taxon>Nematoda</taxon>
        <taxon>Chromadorea</taxon>
        <taxon>Rhabditida</taxon>
        <taxon>Rhabditina</taxon>
        <taxon>Rhabditomorpha</taxon>
        <taxon>Rhabditoidea</taxon>
        <taxon>Rhabditidae</taxon>
        <taxon>Peloderinae</taxon>
        <taxon>Caenorhabditis</taxon>
    </lineage>
</organism>
<evidence type="ECO:0000250" key="1"/>
<evidence type="ECO:0000305" key="2"/>
<accession>Q61SU8</accession>
<accession>A8X131</accession>
<keyword id="KW-0143">Chaperone</keyword>
<keyword id="KW-0963">Cytoplasm</keyword>
<keyword id="KW-1185">Reference proteome</keyword>
<name>PFD1_CAEBR</name>
<dbReference type="EMBL" id="HE600909">
    <property type="protein sequence ID" value="CAP26341.3"/>
    <property type="molecule type" value="Genomic_DNA"/>
</dbReference>
<dbReference type="SMR" id="Q61SU8"/>
<dbReference type="FunCoup" id="Q61SU8">
    <property type="interactions" value="2334"/>
</dbReference>
<dbReference type="STRING" id="6238.Q61SU8"/>
<dbReference type="EnsemblMetazoa" id="CBG06021.1">
    <property type="protein sequence ID" value="CBG06021.1"/>
    <property type="gene ID" value="WBGene00028367"/>
</dbReference>
<dbReference type="KEGG" id="cbr:CBG_06021"/>
<dbReference type="CTD" id="8575289"/>
<dbReference type="WormBase" id="CBG06021">
    <property type="protein sequence ID" value="CBP01634"/>
    <property type="gene ID" value="WBGene00028367"/>
    <property type="gene designation" value="Cbr-pfd-1"/>
</dbReference>
<dbReference type="eggNOG" id="KOG3501">
    <property type="taxonomic scope" value="Eukaryota"/>
</dbReference>
<dbReference type="HOGENOM" id="CLU_122140_4_0_1"/>
<dbReference type="InParanoid" id="Q61SU8"/>
<dbReference type="OMA" id="QKMRISE"/>
<dbReference type="OrthoDB" id="5242628at2759"/>
<dbReference type="Proteomes" id="UP000008549">
    <property type="component" value="Unassembled WGS sequence"/>
</dbReference>
<dbReference type="GO" id="GO:0005737">
    <property type="term" value="C:cytoplasm"/>
    <property type="evidence" value="ECO:0000250"/>
    <property type="project" value="UniProtKB"/>
</dbReference>
<dbReference type="GO" id="GO:0016272">
    <property type="term" value="C:prefoldin complex"/>
    <property type="evidence" value="ECO:0007669"/>
    <property type="project" value="InterPro"/>
</dbReference>
<dbReference type="GO" id="GO:0044183">
    <property type="term" value="F:protein folding chaperone"/>
    <property type="evidence" value="ECO:0000318"/>
    <property type="project" value="GO_Central"/>
</dbReference>
<dbReference type="GO" id="GO:0051082">
    <property type="term" value="F:unfolded protein binding"/>
    <property type="evidence" value="ECO:0000318"/>
    <property type="project" value="GO_Central"/>
</dbReference>
<dbReference type="GO" id="GO:0008406">
    <property type="term" value="P:gonad development"/>
    <property type="evidence" value="ECO:0000250"/>
    <property type="project" value="UniProtKB"/>
</dbReference>
<dbReference type="GO" id="GO:0006457">
    <property type="term" value="P:protein folding"/>
    <property type="evidence" value="ECO:0000318"/>
    <property type="project" value="GO_Central"/>
</dbReference>
<dbReference type="FunFam" id="1.10.287.370:FF:000035">
    <property type="entry name" value="Probable prefoldin subunit 1"/>
    <property type="match status" value="1"/>
</dbReference>
<dbReference type="Gene3D" id="1.10.287.370">
    <property type="match status" value="1"/>
</dbReference>
<dbReference type="InterPro" id="IPR002777">
    <property type="entry name" value="PFD_beta-like"/>
</dbReference>
<dbReference type="InterPro" id="IPR009053">
    <property type="entry name" value="Prefoldin"/>
</dbReference>
<dbReference type="PANTHER" id="PTHR20903:SF0">
    <property type="entry name" value="PREFOLDIN SUBUNIT 1"/>
    <property type="match status" value="1"/>
</dbReference>
<dbReference type="PANTHER" id="PTHR20903">
    <property type="entry name" value="PREFOLDIN SUBUNIT 1-RELATED"/>
    <property type="match status" value="1"/>
</dbReference>
<dbReference type="Pfam" id="PF01920">
    <property type="entry name" value="Prefoldin_2"/>
    <property type="match status" value="1"/>
</dbReference>
<dbReference type="SUPFAM" id="SSF46579">
    <property type="entry name" value="Prefoldin"/>
    <property type="match status" value="1"/>
</dbReference>
<feature type="chain" id="PRO_0000232449" description="Probable prefoldin subunit 1">
    <location>
        <begin position="1"/>
        <end position="117"/>
    </location>
</feature>
<comment type="function">
    <text evidence="1">Binds specifically to cytosolic chaperonin (c-CPN) and transfers target proteins to it. Binds to nascent polypeptide chain and promotes folding in an environment in which there are many competing pathways for nonnative proteins. Has a role in gonadogenesis (By similarity).</text>
</comment>
<comment type="subunit">
    <text evidence="1">Heterohexamer of two PFD-alpha type and four PFD-beta type subunits.</text>
</comment>
<comment type="subcellular location">
    <subcellularLocation>
        <location evidence="1">Cytoplasm</location>
    </subcellularLocation>
</comment>
<comment type="similarity">
    <text evidence="2">Belongs to the prefoldin subunit beta family.</text>
</comment>
<proteinExistence type="inferred from homology"/>
<reference key="1">
    <citation type="journal article" date="2003" name="PLoS Biol.">
        <title>The genome sequence of Caenorhabditis briggsae: a platform for comparative genomics.</title>
        <authorList>
            <person name="Stein L.D."/>
            <person name="Bao Z."/>
            <person name="Blasiar D."/>
            <person name="Blumenthal T."/>
            <person name="Brent M.R."/>
            <person name="Chen N."/>
            <person name="Chinwalla A."/>
            <person name="Clarke L."/>
            <person name="Clee C."/>
            <person name="Coghlan A."/>
            <person name="Coulson A."/>
            <person name="D'Eustachio P."/>
            <person name="Fitch D.H.A."/>
            <person name="Fulton L.A."/>
            <person name="Fulton R.E."/>
            <person name="Griffiths-Jones S."/>
            <person name="Harris T.W."/>
            <person name="Hillier L.W."/>
            <person name="Kamath R."/>
            <person name="Kuwabara P.E."/>
            <person name="Mardis E.R."/>
            <person name="Marra M.A."/>
            <person name="Miner T.L."/>
            <person name="Minx P."/>
            <person name="Mullikin J.C."/>
            <person name="Plumb R.W."/>
            <person name="Rogers J."/>
            <person name="Schein J.E."/>
            <person name="Sohrmann M."/>
            <person name="Spieth J."/>
            <person name="Stajich J.E."/>
            <person name="Wei C."/>
            <person name="Willey D."/>
            <person name="Wilson R.K."/>
            <person name="Durbin R.M."/>
            <person name="Waterston R.H."/>
        </authorList>
    </citation>
    <scope>NUCLEOTIDE SEQUENCE [LARGE SCALE GENOMIC DNA]</scope>
    <source>
        <strain>AF16</strain>
    </source>
</reference>
<gene>
    <name type="primary">pfd-1</name>
    <name type="ORF">CBG06021</name>
</gene>